<organism>
    <name type="scientific">Streptococcus pneumoniae (strain Hungary19A-6)</name>
    <dbReference type="NCBI Taxonomy" id="487214"/>
    <lineage>
        <taxon>Bacteria</taxon>
        <taxon>Bacillati</taxon>
        <taxon>Bacillota</taxon>
        <taxon>Bacilli</taxon>
        <taxon>Lactobacillales</taxon>
        <taxon>Streptococcaceae</taxon>
        <taxon>Streptococcus</taxon>
    </lineage>
</organism>
<evidence type="ECO:0000255" key="1">
    <source>
        <dbReference type="HAMAP-Rule" id="MF_00318"/>
    </source>
</evidence>
<keyword id="KW-0963">Cytoplasm</keyword>
<keyword id="KW-0324">Glycolysis</keyword>
<keyword id="KW-0456">Lyase</keyword>
<keyword id="KW-0460">Magnesium</keyword>
<keyword id="KW-0479">Metal-binding</keyword>
<keyword id="KW-0964">Secreted</keyword>
<protein>
    <recommendedName>
        <fullName evidence="1">Enolase</fullName>
        <ecNumber evidence="1">4.2.1.11</ecNumber>
    </recommendedName>
    <alternativeName>
        <fullName evidence="1">2-phospho-D-glycerate hydro-lyase</fullName>
    </alternativeName>
    <alternativeName>
        <fullName evidence="1">2-phosphoglycerate dehydratase</fullName>
    </alternativeName>
</protein>
<proteinExistence type="inferred from homology"/>
<comment type="function">
    <text evidence="1">Catalyzes the reversible conversion of 2-phosphoglycerate (2-PG) into phosphoenolpyruvate (PEP). It is essential for the degradation of carbohydrates via glycolysis.</text>
</comment>
<comment type="catalytic activity">
    <reaction evidence="1">
        <text>(2R)-2-phosphoglycerate = phosphoenolpyruvate + H2O</text>
        <dbReference type="Rhea" id="RHEA:10164"/>
        <dbReference type="ChEBI" id="CHEBI:15377"/>
        <dbReference type="ChEBI" id="CHEBI:58289"/>
        <dbReference type="ChEBI" id="CHEBI:58702"/>
        <dbReference type="EC" id="4.2.1.11"/>
    </reaction>
</comment>
<comment type="cofactor">
    <cofactor evidence="1">
        <name>Mg(2+)</name>
        <dbReference type="ChEBI" id="CHEBI:18420"/>
    </cofactor>
    <text evidence="1">Binds a second Mg(2+) ion via substrate during catalysis.</text>
</comment>
<comment type="pathway">
    <text evidence="1">Carbohydrate degradation; glycolysis; pyruvate from D-glyceraldehyde 3-phosphate: step 4/5.</text>
</comment>
<comment type="subcellular location">
    <subcellularLocation>
        <location evidence="1">Cytoplasm</location>
    </subcellularLocation>
    <subcellularLocation>
        <location evidence="1">Secreted</location>
    </subcellularLocation>
    <subcellularLocation>
        <location evidence="1">Cell surface</location>
    </subcellularLocation>
    <text evidence="1">Fractions of enolase are present in both the cytoplasm and on the cell surface.</text>
</comment>
<comment type="similarity">
    <text evidence="1">Belongs to the enolase family.</text>
</comment>
<accession>B1IBR3</accession>
<name>ENO_STRPI</name>
<reference key="1">
    <citation type="journal article" date="2010" name="Genome Biol.">
        <title>Structure and dynamics of the pan-genome of Streptococcus pneumoniae and closely related species.</title>
        <authorList>
            <person name="Donati C."/>
            <person name="Hiller N.L."/>
            <person name="Tettelin H."/>
            <person name="Muzzi A."/>
            <person name="Croucher N.J."/>
            <person name="Angiuoli S.V."/>
            <person name="Oggioni M."/>
            <person name="Dunning Hotopp J.C."/>
            <person name="Hu F.Z."/>
            <person name="Riley D.R."/>
            <person name="Covacci A."/>
            <person name="Mitchell T.J."/>
            <person name="Bentley S.D."/>
            <person name="Kilian M."/>
            <person name="Ehrlich G.D."/>
            <person name="Rappuoli R."/>
            <person name="Moxon E.R."/>
            <person name="Masignani V."/>
        </authorList>
    </citation>
    <scope>NUCLEOTIDE SEQUENCE [LARGE SCALE GENOMIC DNA]</scope>
    <source>
        <strain>Hungary19A-6</strain>
    </source>
</reference>
<sequence>MSIITDVYAREVLDSRGNPTLEVEVYTESGAFGRGMVPSGASTGEHEAVELRDGDKSRYGGLGTQKAVDNVNNIIAEAIIGYDVRDQQAIDRAMIALDGTPNKGKLGANAILGVSIAVARAAADYLEIPLYSYLGGFNTKVLPTPMMNIINGGSHSDAPIAFQEFMILPVGAPTFKEALRYGAEIFHALKKILKSRGLETAVGDEGGFAPRFEGTEDGVETILAAIEAAGYVPGKDVFIGFDCASSEFYDKERKVYDYTKFEGEGAAVRTSAEQIDYLEELVNKYPIITIEDGMDENDWDGWKALTERLGKKVQLVGDDFFVTNTDYLARGIQEGAANSILIKVNQIGTLTETFEAIEMAKEAGYTAVVSHRSGETEDSTIADIAVATNAGQIKTGSLSRTDRIAKYNQLLRIEDQLGEVAEYRGLKSFYNLKK</sequence>
<dbReference type="EC" id="4.2.1.11" evidence="1"/>
<dbReference type="EMBL" id="CP000936">
    <property type="protein sequence ID" value="ACA37424.1"/>
    <property type="molecule type" value="Genomic_DNA"/>
</dbReference>
<dbReference type="RefSeq" id="WP_000022813.1">
    <property type="nucleotide sequence ID" value="NC_010380.1"/>
</dbReference>
<dbReference type="SMR" id="B1IBR3"/>
<dbReference type="GeneID" id="93739591"/>
<dbReference type="KEGG" id="spv:SPH_1222"/>
<dbReference type="HOGENOM" id="CLU_031223_2_1_9"/>
<dbReference type="UniPathway" id="UPA00109">
    <property type="reaction ID" value="UER00187"/>
</dbReference>
<dbReference type="Proteomes" id="UP000002163">
    <property type="component" value="Chromosome"/>
</dbReference>
<dbReference type="GO" id="GO:0009986">
    <property type="term" value="C:cell surface"/>
    <property type="evidence" value="ECO:0007669"/>
    <property type="project" value="UniProtKB-SubCell"/>
</dbReference>
<dbReference type="GO" id="GO:0005576">
    <property type="term" value="C:extracellular region"/>
    <property type="evidence" value="ECO:0007669"/>
    <property type="project" value="UniProtKB-SubCell"/>
</dbReference>
<dbReference type="GO" id="GO:0009274">
    <property type="term" value="C:peptidoglycan-based cell wall"/>
    <property type="evidence" value="ECO:0007669"/>
    <property type="project" value="UniProtKB-ARBA"/>
</dbReference>
<dbReference type="GO" id="GO:0000015">
    <property type="term" value="C:phosphopyruvate hydratase complex"/>
    <property type="evidence" value="ECO:0007669"/>
    <property type="project" value="InterPro"/>
</dbReference>
<dbReference type="GO" id="GO:0000287">
    <property type="term" value="F:magnesium ion binding"/>
    <property type="evidence" value="ECO:0007669"/>
    <property type="project" value="UniProtKB-UniRule"/>
</dbReference>
<dbReference type="GO" id="GO:0004634">
    <property type="term" value="F:phosphopyruvate hydratase activity"/>
    <property type="evidence" value="ECO:0007669"/>
    <property type="project" value="UniProtKB-UniRule"/>
</dbReference>
<dbReference type="GO" id="GO:0006096">
    <property type="term" value="P:glycolytic process"/>
    <property type="evidence" value="ECO:0007669"/>
    <property type="project" value="UniProtKB-UniRule"/>
</dbReference>
<dbReference type="CDD" id="cd03313">
    <property type="entry name" value="enolase"/>
    <property type="match status" value="1"/>
</dbReference>
<dbReference type="FunFam" id="3.20.20.120:FF:000001">
    <property type="entry name" value="Enolase"/>
    <property type="match status" value="1"/>
</dbReference>
<dbReference type="FunFam" id="3.30.390.10:FF:000001">
    <property type="entry name" value="Enolase"/>
    <property type="match status" value="1"/>
</dbReference>
<dbReference type="Gene3D" id="3.20.20.120">
    <property type="entry name" value="Enolase-like C-terminal domain"/>
    <property type="match status" value="1"/>
</dbReference>
<dbReference type="Gene3D" id="3.30.390.10">
    <property type="entry name" value="Enolase-like, N-terminal domain"/>
    <property type="match status" value="1"/>
</dbReference>
<dbReference type="HAMAP" id="MF_00318">
    <property type="entry name" value="Enolase"/>
    <property type="match status" value="1"/>
</dbReference>
<dbReference type="InterPro" id="IPR000941">
    <property type="entry name" value="Enolase"/>
</dbReference>
<dbReference type="InterPro" id="IPR036849">
    <property type="entry name" value="Enolase-like_C_sf"/>
</dbReference>
<dbReference type="InterPro" id="IPR029017">
    <property type="entry name" value="Enolase-like_N"/>
</dbReference>
<dbReference type="InterPro" id="IPR020810">
    <property type="entry name" value="Enolase_C"/>
</dbReference>
<dbReference type="InterPro" id="IPR020809">
    <property type="entry name" value="Enolase_CS"/>
</dbReference>
<dbReference type="InterPro" id="IPR020811">
    <property type="entry name" value="Enolase_N"/>
</dbReference>
<dbReference type="NCBIfam" id="TIGR01060">
    <property type="entry name" value="eno"/>
    <property type="match status" value="1"/>
</dbReference>
<dbReference type="PANTHER" id="PTHR11902">
    <property type="entry name" value="ENOLASE"/>
    <property type="match status" value="1"/>
</dbReference>
<dbReference type="PANTHER" id="PTHR11902:SF1">
    <property type="entry name" value="ENOLASE"/>
    <property type="match status" value="1"/>
</dbReference>
<dbReference type="Pfam" id="PF00113">
    <property type="entry name" value="Enolase_C"/>
    <property type="match status" value="1"/>
</dbReference>
<dbReference type="Pfam" id="PF03952">
    <property type="entry name" value="Enolase_N"/>
    <property type="match status" value="1"/>
</dbReference>
<dbReference type="PIRSF" id="PIRSF001400">
    <property type="entry name" value="Enolase"/>
    <property type="match status" value="1"/>
</dbReference>
<dbReference type="PRINTS" id="PR00148">
    <property type="entry name" value="ENOLASE"/>
</dbReference>
<dbReference type="SFLD" id="SFLDS00001">
    <property type="entry name" value="Enolase"/>
    <property type="match status" value="1"/>
</dbReference>
<dbReference type="SFLD" id="SFLDF00002">
    <property type="entry name" value="enolase"/>
    <property type="match status" value="1"/>
</dbReference>
<dbReference type="SMART" id="SM01192">
    <property type="entry name" value="Enolase_C"/>
    <property type="match status" value="1"/>
</dbReference>
<dbReference type="SMART" id="SM01193">
    <property type="entry name" value="Enolase_N"/>
    <property type="match status" value="1"/>
</dbReference>
<dbReference type="SUPFAM" id="SSF51604">
    <property type="entry name" value="Enolase C-terminal domain-like"/>
    <property type="match status" value="1"/>
</dbReference>
<dbReference type="SUPFAM" id="SSF54826">
    <property type="entry name" value="Enolase N-terminal domain-like"/>
    <property type="match status" value="1"/>
</dbReference>
<dbReference type="PROSITE" id="PS00164">
    <property type="entry name" value="ENOLASE"/>
    <property type="match status" value="1"/>
</dbReference>
<feature type="chain" id="PRO_1000115920" description="Enolase">
    <location>
        <begin position="1"/>
        <end position="434"/>
    </location>
</feature>
<feature type="active site" description="Proton donor" evidence="1">
    <location>
        <position position="205"/>
    </location>
</feature>
<feature type="active site" description="Proton acceptor" evidence="1">
    <location>
        <position position="343"/>
    </location>
</feature>
<feature type="binding site" evidence="1">
    <location>
        <position position="163"/>
    </location>
    <ligand>
        <name>(2R)-2-phosphoglycerate</name>
        <dbReference type="ChEBI" id="CHEBI:58289"/>
    </ligand>
</feature>
<feature type="binding site" evidence="1">
    <location>
        <position position="242"/>
    </location>
    <ligand>
        <name>Mg(2+)</name>
        <dbReference type="ChEBI" id="CHEBI:18420"/>
    </ligand>
</feature>
<feature type="binding site" evidence="1">
    <location>
        <position position="291"/>
    </location>
    <ligand>
        <name>Mg(2+)</name>
        <dbReference type="ChEBI" id="CHEBI:18420"/>
    </ligand>
</feature>
<feature type="binding site" evidence="1">
    <location>
        <position position="318"/>
    </location>
    <ligand>
        <name>Mg(2+)</name>
        <dbReference type="ChEBI" id="CHEBI:18420"/>
    </ligand>
</feature>
<feature type="binding site" evidence="1">
    <location>
        <position position="343"/>
    </location>
    <ligand>
        <name>(2R)-2-phosphoglycerate</name>
        <dbReference type="ChEBI" id="CHEBI:58289"/>
    </ligand>
</feature>
<feature type="binding site" evidence="1">
    <location>
        <position position="372"/>
    </location>
    <ligand>
        <name>(2R)-2-phosphoglycerate</name>
        <dbReference type="ChEBI" id="CHEBI:58289"/>
    </ligand>
</feature>
<feature type="binding site" evidence="1">
    <location>
        <position position="373"/>
    </location>
    <ligand>
        <name>(2R)-2-phosphoglycerate</name>
        <dbReference type="ChEBI" id="CHEBI:58289"/>
    </ligand>
</feature>
<feature type="binding site" evidence="1">
    <location>
        <position position="394"/>
    </location>
    <ligand>
        <name>(2R)-2-phosphoglycerate</name>
        <dbReference type="ChEBI" id="CHEBI:58289"/>
    </ligand>
</feature>
<gene>
    <name evidence="1" type="primary">eno</name>
    <name type="ordered locus">SPH_1222</name>
</gene>